<dbReference type="EMBL" id="EF441686">
    <property type="protein sequence ID" value="ABO71727.1"/>
    <property type="molecule type" value="Genomic_DNA"/>
</dbReference>
<dbReference type="EMBL" id="CH954177">
    <property type="protein sequence ID" value="EDV58911.1"/>
    <property type="molecule type" value="Genomic_DNA"/>
</dbReference>
<dbReference type="EnsemblMetazoa" id="FBtr0130371">
    <property type="protein sequence ID" value="FBpp0128863"/>
    <property type="gene ID" value="FBgn0102626"/>
</dbReference>
<dbReference type="EnsemblMetazoa" id="XM_001969816.2">
    <property type="protein sequence ID" value="XP_001969852.1"/>
    <property type="gene ID" value="LOC6542574"/>
</dbReference>
<dbReference type="GeneID" id="6542574"/>
<dbReference type="KEGG" id="der:6542574"/>
<dbReference type="CTD" id="34558"/>
<dbReference type="HOGENOM" id="CLU_169196_0_0_1"/>
<dbReference type="OMA" id="CAQEAQA"/>
<dbReference type="OrthoDB" id="8062718at2759"/>
<dbReference type="PhylomeDB" id="B3N4J9"/>
<dbReference type="Proteomes" id="UP000008711">
    <property type="component" value="Unassembled WGS sequence"/>
</dbReference>
<dbReference type="GO" id="GO:0042600">
    <property type="term" value="C:egg chorion"/>
    <property type="evidence" value="ECO:0007669"/>
    <property type="project" value="EnsemblMetazoa"/>
</dbReference>
<dbReference type="GO" id="GO:0005615">
    <property type="term" value="C:extracellular space"/>
    <property type="evidence" value="ECO:0000250"/>
    <property type="project" value="UniProtKB"/>
</dbReference>
<dbReference type="GO" id="GO:0060388">
    <property type="term" value="C:vitelline envelope"/>
    <property type="evidence" value="ECO:0007669"/>
    <property type="project" value="EnsemblMetazoa"/>
</dbReference>
<dbReference type="GO" id="GO:0008316">
    <property type="term" value="F:structural constituent of vitelline membrane"/>
    <property type="evidence" value="ECO:0000250"/>
    <property type="project" value="UniProtKB"/>
</dbReference>
<dbReference type="GO" id="GO:0007305">
    <property type="term" value="P:vitelline membrane formation involved in chorion-containing eggshell formation"/>
    <property type="evidence" value="ECO:0000250"/>
    <property type="project" value="UniProtKB"/>
</dbReference>
<dbReference type="InterPro" id="IPR013135">
    <property type="entry name" value="Vitelline_membr_Cys-rich-dom"/>
</dbReference>
<dbReference type="Pfam" id="PF10542">
    <property type="entry name" value="Vitelline_membr"/>
    <property type="match status" value="1"/>
</dbReference>
<dbReference type="PROSITE" id="PS51137">
    <property type="entry name" value="VM"/>
    <property type="match status" value="1"/>
</dbReference>
<gene>
    <name evidence="5" type="primary">Vm32E</name>
    <name type="ORF">GG10317</name>
</gene>
<comment type="function">
    <text evidence="1">Major early eggshell protein.</text>
</comment>
<comment type="subcellular location">
    <subcellularLocation>
        <location evidence="1">Secreted</location>
    </subcellularLocation>
</comment>
<comment type="similarity">
    <text evidence="4">Belongs to the vitelline membrane family.</text>
</comment>
<protein>
    <recommendedName>
        <fullName evidence="5">Vitelline membrane protein Vm32E</fullName>
    </recommendedName>
</protein>
<organism>
    <name type="scientific">Drosophila erecta</name>
    <name type="common">Fruit fly</name>
    <dbReference type="NCBI Taxonomy" id="7220"/>
    <lineage>
        <taxon>Eukaryota</taxon>
        <taxon>Metazoa</taxon>
        <taxon>Ecdysozoa</taxon>
        <taxon>Arthropoda</taxon>
        <taxon>Hexapoda</taxon>
        <taxon>Insecta</taxon>
        <taxon>Pterygota</taxon>
        <taxon>Neoptera</taxon>
        <taxon>Endopterygota</taxon>
        <taxon>Diptera</taxon>
        <taxon>Brachycera</taxon>
        <taxon>Muscomorpha</taxon>
        <taxon>Ephydroidea</taxon>
        <taxon>Drosophilidae</taxon>
        <taxon>Drosophila</taxon>
        <taxon>Sophophora</taxon>
    </lineage>
</organism>
<keyword id="KW-0964">Secreted</keyword>
<keyword id="KW-0732">Signal</keyword>
<accession>B3N4J9</accession>
<accession>A4UM18</accession>
<feature type="signal peptide" evidence="2">
    <location>
        <begin position="1"/>
        <end position="17"/>
    </location>
</feature>
<feature type="chain" id="PRO_0000398794" description="Vitelline membrane protein Vm32E" evidence="2">
    <location>
        <begin position="18"/>
        <end position="113"/>
    </location>
</feature>
<feature type="domain" description="VM" evidence="3">
    <location>
        <begin position="33"/>
        <end position="70"/>
    </location>
</feature>
<feature type="sequence conflict" description="In Ref. 1; ABO71727." evidence="4" ref="1">
    <original>A</original>
    <variation>AYPA</variation>
    <location>
        <position position="27"/>
    </location>
</feature>
<evidence type="ECO:0000250" key="1">
    <source>
        <dbReference type="UniProtKB" id="Q9VKI3"/>
    </source>
</evidence>
<evidence type="ECO:0000255" key="2"/>
<evidence type="ECO:0000255" key="3">
    <source>
        <dbReference type="PROSITE-ProRule" id="PRU00483"/>
    </source>
</evidence>
<evidence type="ECO:0000305" key="4"/>
<evidence type="ECO:0000312" key="5">
    <source>
        <dbReference type="EMBL" id="ABO71727.1"/>
    </source>
</evidence>
<evidence type="ECO:0000312" key="6">
    <source>
        <dbReference type="EMBL" id="EDV58911.1"/>
    </source>
</evidence>
<name>VTU4_DROER</name>
<sequence>MKIVAFTLVAFVALAGASCPYAAPAVAPAAAPGYPAPPCPTNYLFSCQPNLAPVPCAQQAPAYGSAGAYTEQVPRYVENPSREQLQRFHQRVGMAALMEELRGLGQGIQGQQY</sequence>
<reference evidence="5" key="1">
    <citation type="journal article" date="2007" name="Mol. Biol. Evol.">
        <title>Rapid evolution of outer egg membrane proteins in the Drosophila melanogaster subgroup: a case of ecologically driven evolution of female reproductive traits.</title>
        <authorList>
            <person name="Jagadeeshan S."/>
            <person name="Singh R.S."/>
        </authorList>
    </citation>
    <scope>NUCLEOTIDE SEQUENCE [GENOMIC DNA]</scope>
</reference>
<reference evidence="6" key="2">
    <citation type="journal article" date="2007" name="Nature">
        <title>Evolution of genes and genomes on the Drosophila phylogeny.</title>
        <authorList>
            <consortium name="Drosophila 12 genomes consortium"/>
        </authorList>
    </citation>
    <scope>NUCLEOTIDE SEQUENCE [LARGE SCALE GENOMIC DNA]</scope>
    <source>
        <strain evidence="6">Tucson 14021-0224.01</strain>
    </source>
</reference>
<proteinExistence type="inferred from homology"/>